<protein>
    <recommendedName>
        <fullName evidence="1">Proline--tRNA ligase</fullName>
        <ecNumber evidence="1">6.1.1.15</ecNumber>
    </recommendedName>
    <alternativeName>
        <fullName evidence="1">Prolyl-tRNA synthetase</fullName>
        <shortName evidence="1">ProRS</shortName>
    </alternativeName>
</protein>
<dbReference type="EC" id="6.1.1.15" evidence="1"/>
<dbReference type="EMBL" id="CP001033">
    <property type="protein sequence ID" value="ACB89526.1"/>
    <property type="molecule type" value="Genomic_DNA"/>
</dbReference>
<dbReference type="RefSeq" id="WP_000814060.1">
    <property type="nucleotide sequence ID" value="NC_010582.1"/>
</dbReference>
<dbReference type="SMR" id="B2ISI9"/>
<dbReference type="KEGG" id="spw:SPCG_0274"/>
<dbReference type="HOGENOM" id="CLU_016739_0_0_9"/>
<dbReference type="GO" id="GO:0005829">
    <property type="term" value="C:cytosol"/>
    <property type="evidence" value="ECO:0007669"/>
    <property type="project" value="TreeGrafter"/>
</dbReference>
<dbReference type="GO" id="GO:0002161">
    <property type="term" value="F:aminoacyl-tRNA deacylase activity"/>
    <property type="evidence" value="ECO:0007669"/>
    <property type="project" value="InterPro"/>
</dbReference>
<dbReference type="GO" id="GO:0005524">
    <property type="term" value="F:ATP binding"/>
    <property type="evidence" value="ECO:0007669"/>
    <property type="project" value="UniProtKB-UniRule"/>
</dbReference>
<dbReference type="GO" id="GO:0140096">
    <property type="term" value="F:catalytic activity, acting on a protein"/>
    <property type="evidence" value="ECO:0007669"/>
    <property type="project" value="UniProtKB-ARBA"/>
</dbReference>
<dbReference type="GO" id="GO:0004827">
    <property type="term" value="F:proline-tRNA ligase activity"/>
    <property type="evidence" value="ECO:0007669"/>
    <property type="project" value="UniProtKB-UniRule"/>
</dbReference>
<dbReference type="GO" id="GO:0016740">
    <property type="term" value="F:transferase activity"/>
    <property type="evidence" value="ECO:0007669"/>
    <property type="project" value="UniProtKB-ARBA"/>
</dbReference>
<dbReference type="GO" id="GO:0006433">
    <property type="term" value="P:prolyl-tRNA aminoacylation"/>
    <property type="evidence" value="ECO:0007669"/>
    <property type="project" value="UniProtKB-UniRule"/>
</dbReference>
<dbReference type="CDD" id="cd04334">
    <property type="entry name" value="ProRS-INS"/>
    <property type="match status" value="1"/>
</dbReference>
<dbReference type="CDD" id="cd00861">
    <property type="entry name" value="ProRS_anticodon_short"/>
    <property type="match status" value="1"/>
</dbReference>
<dbReference type="CDD" id="cd00779">
    <property type="entry name" value="ProRS_core_prok"/>
    <property type="match status" value="1"/>
</dbReference>
<dbReference type="FunFam" id="3.30.930.10:FF:000062">
    <property type="entry name" value="Proline--tRNA ligase"/>
    <property type="match status" value="1"/>
</dbReference>
<dbReference type="FunFam" id="3.30.930.10:FF:000070">
    <property type="entry name" value="Proline--tRNA ligase"/>
    <property type="match status" value="1"/>
</dbReference>
<dbReference type="FunFam" id="3.40.50.800:FF:000011">
    <property type="entry name" value="Proline--tRNA ligase"/>
    <property type="match status" value="1"/>
</dbReference>
<dbReference type="FunFam" id="3.90.960.10:FF:000004">
    <property type="entry name" value="Proline--tRNA ligase"/>
    <property type="match status" value="1"/>
</dbReference>
<dbReference type="Gene3D" id="3.40.50.800">
    <property type="entry name" value="Anticodon-binding domain"/>
    <property type="match status" value="1"/>
</dbReference>
<dbReference type="Gene3D" id="3.30.930.10">
    <property type="entry name" value="Bira Bifunctional Protein, Domain 2"/>
    <property type="match status" value="2"/>
</dbReference>
<dbReference type="Gene3D" id="3.90.960.10">
    <property type="entry name" value="YbaK/aminoacyl-tRNA synthetase-associated domain"/>
    <property type="match status" value="1"/>
</dbReference>
<dbReference type="HAMAP" id="MF_01569">
    <property type="entry name" value="Pro_tRNA_synth_type1"/>
    <property type="match status" value="1"/>
</dbReference>
<dbReference type="InterPro" id="IPR002314">
    <property type="entry name" value="aa-tRNA-synt_IIb"/>
</dbReference>
<dbReference type="InterPro" id="IPR006195">
    <property type="entry name" value="aa-tRNA-synth_II"/>
</dbReference>
<dbReference type="InterPro" id="IPR045864">
    <property type="entry name" value="aa-tRNA-synth_II/BPL/LPL"/>
</dbReference>
<dbReference type="InterPro" id="IPR004154">
    <property type="entry name" value="Anticodon-bd"/>
</dbReference>
<dbReference type="InterPro" id="IPR036621">
    <property type="entry name" value="Anticodon-bd_dom_sf"/>
</dbReference>
<dbReference type="InterPro" id="IPR002316">
    <property type="entry name" value="Pro-tRNA-ligase_IIa"/>
</dbReference>
<dbReference type="InterPro" id="IPR004500">
    <property type="entry name" value="Pro-tRNA-synth_IIa_bac-type"/>
</dbReference>
<dbReference type="InterPro" id="IPR023717">
    <property type="entry name" value="Pro-tRNA-Synthase_IIa_type1"/>
</dbReference>
<dbReference type="InterPro" id="IPR050062">
    <property type="entry name" value="Pro-tRNA_synthetase"/>
</dbReference>
<dbReference type="InterPro" id="IPR044140">
    <property type="entry name" value="ProRS_anticodon_short"/>
</dbReference>
<dbReference type="InterPro" id="IPR033730">
    <property type="entry name" value="ProRS_core_prok"/>
</dbReference>
<dbReference type="InterPro" id="IPR036754">
    <property type="entry name" value="YbaK/aa-tRNA-synt-asso_dom_sf"/>
</dbReference>
<dbReference type="InterPro" id="IPR007214">
    <property type="entry name" value="YbaK/aa-tRNA-synth-assoc-dom"/>
</dbReference>
<dbReference type="NCBIfam" id="NF006625">
    <property type="entry name" value="PRK09194.1"/>
    <property type="match status" value="1"/>
</dbReference>
<dbReference type="NCBIfam" id="TIGR00409">
    <property type="entry name" value="proS_fam_II"/>
    <property type="match status" value="2"/>
</dbReference>
<dbReference type="PANTHER" id="PTHR42753">
    <property type="entry name" value="MITOCHONDRIAL RIBOSOME PROTEIN L39/PROLYL-TRNA LIGASE FAMILY MEMBER"/>
    <property type="match status" value="1"/>
</dbReference>
<dbReference type="PANTHER" id="PTHR42753:SF2">
    <property type="entry name" value="PROLINE--TRNA LIGASE"/>
    <property type="match status" value="1"/>
</dbReference>
<dbReference type="Pfam" id="PF03129">
    <property type="entry name" value="HGTP_anticodon"/>
    <property type="match status" value="1"/>
</dbReference>
<dbReference type="Pfam" id="PF00587">
    <property type="entry name" value="tRNA-synt_2b"/>
    <property type="match status" value="1"/>
</dbReference>
<dbReference type="Pfam" id="PF04073">
    <property type="entry name" value="tRNA_edit"/>
    <property type="match status" value="1"/>
</dbReference>
<dbReference type="PRINTS" id="PR01046">
    <property type="entry name" value="TRNASYNTHPRO"/>
</dbReference>
<dbReference type="SUPFAM" id="SSF52954">
    <property type="entry name" value="Class II aaRS ABD-related"/>
    <property type="match status" value="1"/>
</dbReference>
<dbReference type="SUPFAM" id="SSF55681">
    <property type="entry name" value="Class II aaRS and biotin synthetases"/>
    <property type="match status" value="1"/>
</dbReference>
<dbReference type="SUPFAM" id="SSF55826">
    <property type="entry name" value="YbaK/ProRS associated domain"/>
    <property type="match status" value="1"/>
</dbReference>
<dbReference type="PROSITE" id="PS50862">
    <property type="entry name" value="AA_TRNA_LIGASE_II"/>
    <property type="match status" value="1"/>
</dbReference>
<feature type="chain" id="PRO_1000199426" description="Proline--tRNA ligase">
    <location>
        <begin position="1"/>
        <end position="617"/>
    </location>
</feature>
<sequence>MKQSKMPIPTLREMPSDAQVISHALMLRAGYVRQVSAGVYSYLPLANRVIEKAKNIMRQEFEKIGAVEMLAPALLSAELWRESGRYETYGEDLYKLKNREKSDFILGPTHEETFTAIVRDSVKSYKQLPLNLYQIQPKYRDEKRPRNGLLRTREFIMKDAYSFHANYDSLDSVYDEYKAAYERIFTRSGLDFKAIIGDGGAMGGKDSQEFMAITSARTALDRWVVLDKSVVSFDEIPAEVQEEIKAELLKWIVSGEDTIAYSSESSYAANLEMATNEYKPSNRVVAEEEVTRVATPDVKSIDEVAAFLNVPEEQTIKTLFYIADGELVAALLVGNDQLNEVKLKNHLGADFFDVASEEEVANVVQAGFGSLGPVGLPENIKIIADRKVQDVRNAVVGANEDGYHLTGVNPGRDFTAEYVDIREVREGEISPDGQGVLNFARGIEIGHIFKLGTRYSASMGADVLDENGRAVPIIMGCYGIGVSRLLSAVMEQHARLFVNKTPKGEYRYAWGINFPKELAPFDVHLITVNVKDEEAQALTEKLEASLMGAGYEVLTDDRNERVGVKFSDSDLIGLPIRITVGKKATDGIVEVKIKATGDTIEVHADNVLETLEILSKK</sequence>
<comment type="function">
    <text evidence="1">Catalyzes the attachment of proline to tRNA(Pro) in a two-step reaction: proline is first activated by ATP to form Pro-AMP and then transferred to the acceptor end of tRNA(Pro). As ProRS can inadvertently accommodate and process non-cognate amino acids such as alanine and cysteine, to avoid such errors it has two additional distinct editing activities against alanine. One activity is designated as 'pretransfer' editing and involves the tRNA(Pro)-independent hydrolysis of activated Ala-AMP. The other activity is designated 'posttransfer' editing and involves deacylation of mischarged Ala-tRNA(Pro). The misacylated Cys-tRNA(Pro) is not edited by ProRS.</text>
</comment>
<comment type="catalytic activity">
    <reaction evidence="1">
        <text>tRNA(Pro) + L-proline + ATP = L-prolyl-tRNA(Pro) + AMP + diphosphate</text>
        <dbReference type="Rhea" id="RHEA:14305"/>
        <dbReference type="Rhea" id="RHEA-COMP:9700"/>
        <dbReference type="Rhea" id="RHEA-COMP:9702"/>
        <dbReference type="ChEBI" id="CHEBI:30616"/>
        <dbReference type="ChEBI" id="CHEBI:33019"/>
        <dbReference type="ChEBI" id="CHEBI:60039"/>
        <dbReference type="ChEBI" id="CHEBI:78442"/>
        <dbReference type="ChEBI" id="CHEBI:78532"/>
        <dbReference type="ChEBI" id="CHEBI:456215"/>
        <dbReference type="EC" id="6.1.1.15"/>
    </reaction>
</comment>
<comment type="subunit">
    <text evidence="1">Homodimer.</text>
</comment>
<comment type="subcellular location">
    <subcellularLocation>
        <location evidence="1">Cytoplasm</location>
    </subcellularLocation>
</comment>
<comment type="domain">
    <text evidence="1">Consists of three domains: the N-terminal catalytic domain, the editing domain and the C-terminal anticodon-binding domain.</text>
</comment>
<comment type="similarity">
    <text evidence="1">Belongs to the class-II aminoacyl-tRNA synthetase family. ProS type 1 subfamily.</text>
</comment>
<name>SYP_STRPS</name>
<organism>
    <name type="scientific">Streptococcus pneumoniae (strain CGSP14)</name>
    <dbReference type="NCBI Taxonomy" id="516950"/>
    <lineage>
        <taxon>Bacteria</taxon>
        <taxon>Bacillati</taxon>
        <taxon>Bacillota</taxon>
        <taxon>Bacilli</taxon>
        <taxon>Lactobacillales</taxon>
        <taxon>Streptococcaceae</taxon>
        <taxon>Streptococcus</taxon>
    </lineage>
</organism>
<keyword id="KW-0030">Aminoacyl-tRNA synthetase</keyword>
<keyword id="KW-0067">ATP-binding</keyword>
<keyword id="KW-0963">Cytoplasm</keyword>
<keyword id="KW-0436">Ligase</keyword>
<keyword id="KW-0547">Nucleotide-binding</keyword>
<keyword id="KW-0648">Protein biosynthesis</keyword>
<accession>B2ISI9</accession>
<gene>
    <name evidence="1" type="primary">proS</name>
    <name type="ordered locus">SPCG_0274</name>
</gene>
<evidence type="ECO:0000255" key="1">
    <source>
        <dbReference type="HAMAP-Rule" id="MF_01569"/>
    </source>
</evidence>
<reference key="1">
    <citation type="journal article" date="2009" name="BMC Genomics">
        <title>Genome evolution driven by host adaptations results in a more virulent and antimicrobial-resistant Streptococcus pneumoniae serotype 14.</title>
        <authorList>
            <person name="Ding F."/>
            <person name="Tang P."/>
            <person name="Hsu M.-H."/>
            <person name="Cui P."/>
            <person name="Hu S."/>
            <person name="Yu J."/>
            <person name="Chiu C.-H."/>
        </authorList>
    </citation>
    <scope>NUCLEOTIDE SEQUENCE [LARGE SCALE GENOMIC DNA]</scope>
    <source>
        <strain>CGSP14</strain>
    </source>
</reference>
<proteinExistence type="inferred from homology"/>